<gene>
    <name evidence="1" type="primary">atpH</name>
    <name evidence="1" type="synonym">atpD</name>
    <name type="ordered locus">PMM1452</name>
</gene>
<organism>
    <name type="scientific">Prochlorococcus marinus subsp. pastoris (strain CCMP1986 / NIES-2087 / MED4)</name>
    <dbReference type="NCBI Taxonomy" id="59919"/>
    <lineage>
        <taxon>Bacteria</taxon>
        <taxon>Bacillati</taxon>
        <taxon>Cyanobacteriota</taxon>
        <taxon>Cyanophyceae</taxon>
        <taxon>Synechococcales</taxon>
        <taxon>Prochlorococcaceae</taxon>
        <taxon>Prochlorococcus</taxon>
    </lineage>
</organism>
<comment type="function">
    <text evidence="1">F(1)F(0) ATP synthase produces ATP from ADP in the presence of a proton or sodium gradient. F-type ATPases consist of two structural domains, F(1) containing the extramembraneous catalytic core and F(0) containing the membrane proton channel, linked together by a central stalk and a peripheral stalk. During catalysis, ATP synthesis in the catalytic domain of F(1) is coupled via a rotary mechanism of the central stalk subunits to proton translocation.</text>
</comment>
<comment type="function">
    <text evidence="1">This protein is part of the stalk that links CF(0) to CF(1). It either transmits conformational changes from CF(0) to CF(1) or is implicated in proton conduction.</text>
</comment>
<comment type="subunit">
    <text evidence="1">F-type ATPases have 2 components, F(1) - the catalytic core - and F(0) - the membrane proton channel. F(1) has five subunits: alpha(3), beta(3), gamma(1), delta(1), epsilon(1). CF(0) has four main subunits: a(1), b(1), b'(1) and c(10-14). The alpha and beta chains form an alternating ring which encloses part of the gamma chain. F(1) is attached to F(0) by a central stalk formed by the gamma and epsilon chains, while a peripheral stalk is formed by the delta, b and b' chains.</text>
</comment>
<comment type="subcellular location">
    <subcellularLocation>
        <location evidence="1">Cellular thylakoid membrane</location>
        <topology evidence="1">Peripheral membrane protein</topology>
    </subcellularLocation>
</comment>
<comment type="similarity">
    <text evidence="1">Belongs to the ATPase delta chain family.</text>
</comment>
<evidence type="ECO:0000255" key="1">
    <source>
        <dbReference type="HAMAP-Rule" id="MF_01416"/>
    </source>
</evidence>
<name>ATPD_PROMP</name>
<feature type="chain" id="PRO_1000184767" description="ATP synthase subunit delta">
    <location>
        <begin position="1"/>
        <end position="180"/>
    </location>
</feature>
<keyword id="KW-0066">ATP synthesis</keyword>
<keyword id="KW-0139">CF(1)</keyword>
<keyword id="KW-0375">Hydrogen ion transport</keyword>
<keyword id="KW-0406">Ion transport</keyword>
<keyword id="KW-0472">Membrane</keyword>
<keyword id="KW-0793">Thylakoid</keyword>
<keyword id="KW-0813">Transport</keyword>
<proteinExistence type="inferred from homology"/>
<sequence>MPLLNSVTTPYAEALLQVVSENDQTEEMVKEVKQLLSLINDSPDLEKTLSSPVLETDTKKKIIIEIFSEKINSSLLNFLKLLADRQRIGIVTSILDRFLEIYRENSNIALATVTSAVELTDDQKGLITKKIINIAGTEKLELVTKIDPSLIGGFVASVGSKVIDASLASQIRKLGLSLSK</sequence>
<dbReference type="EMBL" id="BX548174">
    <property type="protein sequence ID" value="CAE19911.1"/>
    <property type="molecule type" value="Genomic_DNA"/>
</dbReference>
<dbReference type="RefSeq" id="WP_011133081.1">
    <property type="nucleotide sequence ID" value="NC_005072.1"/>
</dbReference>
<dbReference type="SMR" id="Q7V036"/>
<dbReference type="STRING" id="59919.PMM1452"/>
<dbReference type="KEGG" id="pmm:PMM1452"/>
<dbReference type="eggNOG" id="COG0712">
    <property type="taxonomic scope" value="Bacteria"/>
</dbReference>
<dbReference type="HOGENOM" id="CLU_085114_4_1_3"/>
<dbReference type="OrthoDB" id="9802471at2"/>
<dbReference type="Proteomes" id="UP000001026">
    <property type="component" value="Chromosome"/>
</dbReference>
<dbReference type="GO" id="GO:0031676">
    <property type="term" value="C:plasma membrane-derived thylakoid membrane"/>
    <property type="evidence" value="ECO:0007669"/>
    <property type="project" value="UniProtKB-SubCell"/>
</dbReference>
<dbReference type="GO" id="GO:0045259">
    <property type="term" value="C:proton-transporting ATP synthase complex"/>
    <property type="evidence" value="ECO:0007669"/>
    <property type="project" value="UniProtKB-KW"/>
</dbReference>
<dbReference type="GO" id="GO:0046933">
    <property type="term" value="F:proton-transporting ATP synthase activity, rotational mechanism"/>
    <property type="evidence" value="ECO:0007669"/>
    <property type="project" value="UniProtKB-UniRule"/>
</dbReference>
<dbReference type="Gene3D" id="1.10.520.20">
    <property type="entry name" value="N-terminal domain of the delta subunit of the F1F0-ATP synthase"/>
    <property type="match status" value="1"/>
</dbReference>
<dbReference type="HAMAP" id="MF_01416">
    <property type="entry name" value="ATP_synth_delta_bact"/>
    <property type="match status" value="1"/>
</dbReference>
<dbReference type="InterPro" id="IPR026015">
    <property type="entry name" value="ATP_synth_OSCP/delta_N_sf"/>
</dbReference>
<dbReference type="InterPro" id="IPR000711">
    <property type="entry name" value="ATPase_OSCP/dsu"/>
</dbReference>
<dbReference type="NCBIfam" id="TIGR01145">
    <property type="entry name" value="ATP_synt_delta"/>
    <property type="match status" value="1"/>
</dbReference>
<dbReference type="PANTHER" id="PTHR11910">
    <property type="entry name" value="ATP SYNTHASE DELTA CHAIN"/>
    <property type="match status" value="1"/>
</dbReference>
<dbReference type="Pfam" id="PF00213">
    <property type="entry name" value="OSCP"/>
    <property type="match status" value="1"/>
</dbReference>
<dbReference type="PRINTS" id="PR00125">
    <property type="entry name" value="ATPASEDELTA"/>
</dbReference>
<dbReference type="SUPFAM" id="SSF47928">
    <property type="entry name" value="N-terminal domain of the delta subunit of the F1F0-ATP synthase"/>
    <property type="match status" value="1"/>
</dbReference>
<accession>Q7V036</accession>
<reference key="1">
    <citation type="journal article" date="2003" name="Nature">
        <title>Genome divergence in two Prochlorococcus ecotypes reflects oceanic niche differentiation.</title>
        <authorList>
            <person name="Rocap G."/>
            <person name="Larimer F.W."/>
            <person name="Lamerdin J.E."/>
            <person name="Malfatti S."/>
            <person name="Chain P."/>
            <person name="Ahlgren N.A."/>
            <person name="Arellano A."/>
            <person name="Coleman M."/>
            <person name="Hauser L."/>
            <person name="Hess W.R."/>
            <person name="Johnson Z.I."/>
            <person name="Land M.L."/>
            <person name="Lindell D."/>
            <person name="Post A.F."/>
            <person name="Regala W."/>
            <person name="Shah M."/>
            <person name="Shaw S.L."/>
            <person name="Steglich C."/>
            <person name="Sullivan M.B."/>
            <person name="Ting C.S."/>
            <person name="Tolonen A."/>
            <person name="Webb E.A."/>
            <person name="Zinser E.R."/>
            <person name="Chisholm S.W."/>
        </authorList>
    </citation>
    <scope>NUCLEOTIDE SEQUENCE [LARGE SCALE GENOMIC DNA]</scope>
    <source>
        <strain>CCMP1986 / NIES-2087 / MED4</strain>
    </source>
</reference>
<protein>
    <recommendedName>
        <fullName evidence="1">ATP synthase subunit delta</fullName>
    </recommendedName>
    <alternativeName>
        <fullName evidence="1">ATP synthase F(1) sector subunit delta</fullName>
    </alternativeName>
    <alternativeName>
        <fullName evidence="1">F-type ATPase subunit delta</fullName>
        <shortName evidence="1">F-ATPase subunit delta</shortName>
    </alternativeName>
</protein>